<gene>
    <name type="primary">Amyrel</name>
</gene>
<protein>
    <recommendedName>
        <fullName>Alpha-amylase-related protein</fullName>
        <ecNumber evidence="2">3.2.1.1</ecNumber>
    </recommendedName>
</protein>
<keyword id="KW-0106">Calcium</keyword>
<keyword id="KW-0119">Carbohydrate metabolism</keyword>
<keyword id="KW-0868">Chloride</keyword>
<keyword id="KW-1015">Disulfide bond</keyword>
<keyword id="KW-0326">Glycosidase</keyword>
<keyword id="KW-0378">Hydrolase</keyword>
<keyword id="KW-0479">Metal-binding</keyword>
<keyword id="KW-0873">Pyrrolidone carboxylic acid</keyword>
<keyword id="KW-0964">Secreted</keyword>
<keyword id="KW-0732">Signal</keyword>
<organism>
    <name type="scientific">Drosophila mauritiana</name>
    <name type="common">Fruit fly</name>
    <dbReference type="NCBI Taxonomy" id="7226"/>
    <lineage>
        <taxon>Eukaryota</taxon>
        <taxon>Metazoa</taxon>
        <taxon>Ecdysozoa</taxon>
        <taxon>Arthropoda</taxon>
        <taxon>Hexapoda</taxon>
        <taxon>Insecta</taxon>
        <taxon>Pterygota</taxon>
        <taxon>Neoptera</taxon>
        <taxon>Endopterygota</taxon>
        <taxon>Diptera</taxon>
        <taxon>Brachycera</taxon>
        <taxon>Muscomorpha</taxon>
        <taxon>Ephydroidea</taxon>
        <taxon>Drosophilidae</taxon>
        <taxon>Drosophila</taxon>
        <taxon>Sophophora</taxon>
    </lineage>
</organism>
<accession>O77014</accession>
<proteinExistence type="inferred from homology"/>
<reference key="1">
    <citation type="submission" date="2000-01" db="EMBL/GenBank/DDBJ databases">
        <authorList>
            <person name="Da Lage J.-L."/>
        </authorList>
    </citation>
    <scope>NUCLEOTIDE SEQUENCE [GENOMIC DNA]</scope>
</reference>
<comment type="catalytic activity">
    <reaction evidence="2">
        <text>Endohydrolysis of (1-&gt;4)-alpha-D-glucosidic linkages in polysaccharides containing three or more (1-&gt;4)-alpha-linked D-glucose units.</text>
        <dbReference type="EC" id="3.2.1.1"/>
    </reaction>
</comment>
<comment type="cofactor">
    <cofactor evidence="3">
        <name>Ca(2+)</name>
        <dbReference type="ChEBI" id="CHEBI:29108"/>
    </cofactor>
    <text evidence="3">Binds 1 Ca(2+) ion per subunit.</text>
</comment>
<comment type="cofactor">
    <cofactor evidence="3">
        <name>chloride</name>
        <dbReference type="ChEBI" id="CHEBI:17996"/>
    </cofactor>
    <text evidence="3">Binds 1 Cl(-) ion per subunit.</text>
</comment>
<comment type="subunit">
    <text evidence="1">Monomer.</text>
</comment>
<comment type="subcellular location">
    <subcellularLocation>
        <location evidence="5">Secreted</location>
    </subcellularLocation>
</comment>
<comment type="similarity">
    <text evidence="5">Belongs to the glycosyl hydrolase 13 family.</text>
</comment>
<evidence type="ECO:0000250" key="1"/>
<evidence type="ECO:0000250" key="2">
    <source>
        <dbReference type="UniProtKB" id="P04746"/>
    </source>
</evidence>
<evidence type="ECO:0000250" key="3">
    <source>
        <dbReference type="UniProtKB" id="P56634"/>
    </source>
</evidence>
<evidence type="ECO:0000255" key="4"/>
<evidence type="ECO:0000305" key="5"/>
<sequence length="493" mass="55509">MFKFALTQTLCLAGSLSLAQHNPHWWGNRNTIVHLFEWKWSDIAQECESFLGPRGFAGVQVSPVNENIIAAGRPWWERYQPISYKLTTRSGNEEEFGDMVRRCNDVGVRIYVDVLLNHMSGDFDGVAVGTAGTEAEPRKKSFPGVPYTAQDFHPTCEITDWNDRFQVQQCELVGLKDLDQSSDWVRSKLIEFLDHLIELGVAGFRVDAAKHMASEDLEYIYSSLSNLNIDHGFPHNSRPFIFQEVIDHGHETVSRDEYKDLGAVTEFRFSEEIGNAFRGNNALKWLQSWGTGWGFLPSGQALTFVDNHDNQRDAGAVLNYKSPRQYKMATAFHLAYPYGISRVMSSFAFDDHDTPPPQDAQERIISPEFDEDGACVNGWICEHRWRQIYAMVGFKNAVRDAEITGWWDNGDNQISFCRGNKGFLAFNNNLYDLSQDLNTCLPAGTYCDVISGSLIDGSCTGKSVTVNDNGYGYIHIGSDDFDGVLALHVDAKV</sequence>
<feature type="signal peptide" evidence="1">
    <location>
        <begin position="1"/>
        <end position="19"/>
    </location>
</feature>
<feature type="chain" id="PRO_0000001381" description="Alpha-amylase-related protein">
    <location>
        <begin position="20"/>
        <end position="493"/>
    </location>
</feature>
<feature type="active site" description="Nucleophile" evidence="2">
    <location>
        <position position="207"/>
    </location>
</feature>
<feature type="active site" description="Proton donor" evidence="2">
    <location>
        <position position="244"/>
    </location>
</feature>
<feature type="binding site" evidence="3">
    <location>
        <position position="117"/>
    </location>
    <ligand>
        <name>Ca(2+)</name>
        <dbReference type="ChEBI" id="CHEBI:29108"/>
    </ligand>
</feature>
<feature type="binding site" evidence="3">
    <location>
        <position position="168"/>
    </location>
    <ligand>
        <name>Ca(2+)</name>
        <dbReference type="ChEBI" id="CHEBI:29108"/>
    </ligand>
</feature>
<feature type="binding site" evidence="3">
    <location>
        <position position="177"/>
    </location>
    <ligand>
        <name>Ca(2+)</name>
        <dbReference type="ChEBI" id="CHEBI:29108"/>
    </ligand>
</feature>
<feature type="binding site" evidence="3">
    <location>
        <position position="205"/>
    </location>
    <ligand>
        <name>chloride</name>
        <dbReference type="ChEBI" id="CHEBI:17996"/>
    </ligand>
</feature>
<feature type="binding site" evidence="3">
    <location>
        <position position="211"/>
    </location>
    <ligand>
        <name>Ca(2+)</name>
        <dbReference type="ChEBI" id="CHEBI:29108"/>
    </ligand>
</feature>
<feature type="binding site" evidence="3">
    <location>
        <position position="307"/>
    </location>
    <ligand>
        <name>chloride</name>
        <dbReference type="ChEBI" id="CHEBI:17996"/>
    </ligand>
</feature>
<feature type="binding site" evidence="3">
    <location>
        <position position="342"/>
    </location>
    <ligand>
        <name>chloride</name>
        <dbReference type="ChEBI" id="CHEBI:17996"/>
    </ligand>
</feature>
<feature type="site" description="Transition state stabilizer" evidence="2">
    <location>
        <position position="309"/>
    </location>
</feature>
<feature type="modified residue" description="Pyrrolidone carboxylic acid" evidence="1">
    <location>
        <position position="20"/>
    </location>
</feature>
<feature type="disulfide bond" evidence="3">
    <location>
        <begin position="47"/>
        <end position="103"/>
    </location>
</feature>
<feature type="disulfide bond" evidence="3">
    <location>
        <begin position="156"/>
        <end position="170"/>
    </location>
</feature>
<feature type="disulfide bond" evidence="3">
    <location>
        <begin position="375"/>
        <end position="381"/>
    </location>
</feature>
<feature type="disulfide bond" evidence="4">
    <location>
        <begin position="417"/>
        <end position="440"/>
    </location>
</feature>
<feature type="disulfide bond" evidence="3">
    <location>
        <begin position="447"/>
        <end position="459"/>
    </location>
</feature>
<name>AMYR_DROMA</name>
<dbReference type="EC" id="3.2.1.1" evidence="2"/>
<dbReference type="EMBL" id="U96157">
    <property type="protein sequence ID" value="AAC39107.2"/>
    <property type="molecule type" value="Genomic_DNA"/>
</dbReference>
<dbReference type="SMR" id="O77014"/>
<dbReference type="CAZy" id="GH13">
    <property type="family name" value="Glycoside Hydrolase Family 13"/>
</dbReference>
<dbReference type="Proteomes" id="UP000515162">
    <property type="component" value="Unplaced"/>
</dbReference>
<dbReference type="GO" id="GO:0005576">
    <property type="term" value="C:extracellular region"/>
    <property type="evidence" value="ECO:0007669"/>
    <property type="project" value="UniProtKB-SubCell"/>
</dbReference>
<dbReference type="GO" id="GO:0004556">
    <property type="term" value="F:alpha-amylase activity"/>
    <property type="evidence" value="ECO:0007669"/>
    <property type="project" value="UniProtKB-EC"/>
</dbReference>
<dbReference type="GO" id="GO:0046872">
    <property type="term" value="F:metal ion binding"/>
    <property type="evidence" value="ECO:0007669"/>
    <property type="project" value="UniProtKB-KW"/>
</dbReference>
<dbReference type="GO" id="GO:0005975">
    <property type="term" value="P:carbohydrate metabolic process"/>
    <property type="evidence" value="ECO:0007669"/>
    <property type="project" value="InterPro"/>
</dbReference>
<dbReference type="CDD" id="cd11317">
    <property type="entry name" value="AmyAc_bac_euk_AmyA"/>
    <property type="match status" value="1"/>
</dbReference>
<dbReference type="FunFam" id="3.20.20.80:FF:000119">
    <property type="entry name" value="Alpha-amylase-related protein"/>
    <property type="match status" value="1"/>
</dbReference>
<dbReference type="FunFam" id="2.60.40.1180:FF:000020">
    <property type="entry name" value="Pancreatic alpha-amylase"/>
    <property type="match status" value="1"/>
</dbReference>
<dbReference type="Gene3D" id="3.20.20.80">
    <property type="entry name" value="Glycosidases"/>
    <property type="match status" value="1"/>
</dbReference>
<dbReference type="Gene3D" id="2.60.40.1180">
    <property type="entry name" value="Golgi alpha-mannosidase II"/>
    <property type="match status" value="1"/>
</dbReference>
<dbReference type="InterPro" id="IPR006048">
    <property type="entry name" value="A-amylase/branching_C"/>
</dbReference>
<dbReference type="InterPro" id="IPR031319">
    <property type="entry name" value="A-amylase_C"/>
</dbReference>
<dbReference type="InterPro" id="IPR006046">
    <property type="entry name" value="Alpha_amylase"/>
</dbReference>
<dbReference type="InterPro" id="IPR006047">
    <property type="entry name" value="Glyco_hydro_13_cat_dom"/>
</dbReference>
<dbReference type="InterPro" id="IPR013780">
    <property type="entry name" value="Glyco_hydro_b"/>
</dbReference>
<dbReference type="InterPro" id="IPR017853">
    <property type="entry name" value="Glycoside_hydrolase_SF"/>
</dbReference>
<dbReference type="PANTHER" id="PTHR43447">
    <property type="entry name" value="ALPHA-AMYLASE"/>
    <property type="match status" value="1"/>
</dbReference>
<dbReference type="Pfam" id="PF00128">
    <property type="entry name" value="Alpha-amylase"/>
    <property type="match status" value="1"/>
</dbReference>
<dbReference type="Pfam" id="PF02806">
    <property type="entry name" value="Alpha-amylase_C"/>
    <property type="match status" value="1"/>
</dbReference>
<dbReference type="PRINTS" id="PR00110">
    <property type="entry name" value="ALPHAAMYLASE"/>
</dbReference>
<dbReference type="SMART" id="SM00642">
    <property type="entry name" value="Aamy"/>
    <property type="match status" value="1"/>
</dbReference>
<dbReference type="SMART" id="SM00632">
    <property type="entry name" value="Aamy_C"/>
    <property type="match status" value="1"/>
</dbReference>
<dbReference type="SUPFAM" id="SSF51445">
    <property type="entry name" value="(Trans)glycosidases"/>
    <property type="match status" value="1"/>
</dbReference>
<dbReference type="SUPFAM" id="SSF51011">
    <property type="entry name" value="Glycosyl hydrolase domain"/>
    <property type="match status" value="1"/>
</dbReference>